<dbReference type="EC" id="2.1.1.245" evidence="1"/>
<dbReference type="EMBL" id="AE008384">
    <property type="protein sequence ID" value="AAM31780.1"/>
    <property type="molecule type" value="Genomic_DNA"/>
</dbReference>
<dbReference type="SMR" id="Q8PV87"/>
<dbReference type="KEGG" id="mma:MM_2084"/>
<dbReference type="PATRIC" id="fig|192952.21.peg.2392"/>
<dbReference type="eggNOG" id="arCOG01979">
    <property type="taxonomic scope" value="Archaea"/>
</dbReference>
<dbReference type="HOGENOM" id="CLU_050002_0_0_2"/>
<dbReference type="UniPathway" id="UPA00642"/>
<dbReference type="Proteomes" id="UP000000595">
    <property type="component" value="Chromosome"/>
</dbReference>
<dbReference type="GO" id="GO:0051539">
    <property type="term" value="F:4 iron, 4 sulfur cluster binding"/>
    <property type="evidence" value="ECO:0007669"/>
    <property type="project" value="UniProtKB-KW"/>
</dbReference>
<dbReference type="GO" id="GO:0005506">
    <property type="term" value="F:iron ion binding"/>
    <property type="evidence" value="ECO:0007669"/>
    <property type="project" value="UniProtKB-UniRule"/>
</dbReference>
<dbReference type="GO" id="GO:0008168">
    <property type="term" value="F:methyltransferase activity"/>
    <property type="evidence" value="ECO:0007669"/>
    <property type="project" value="UniProtKB-UniRule"/>
</dbReference>
<dbReference type="GO" id="GO:0046356">
    <property type="term" value="P:acetyl-CoA catabolic process"/>
    <property type="evidence" value="ECO:0007669"/>
    <property type="project" value="InterPro"/>
</dbReference>
<dbReference type="GO" id="GO:0019385">
    <property type="term" value="P:methanogenesis, from acetate"/>
    <property type="evidence" value="ECO:0007669"/>
    <property type="project" value="UniProtKB-UniRule"/>
</dbReference>
<dbReference type="GO" id="GO:0032259">
    <property type="term" value="P:methylation"/>
    <property type="evidence" value="ECO:0007669"/>
    <property type="project" value="UniProtKB-KW"/>
</dbReference>
<dbReference type="Gene3D" id="3.40.50.11600">
    <property type="match status" value="1"/>
</dbReference>
<dbReference type="Gene3D" id="3.20.20.20">
    <property type="entry name" value="Dihydropteroate synthase-like"/>
    <property type="match status" value="1"/>
</dbReference>
<dbReference type="HAMAP" id="MF_01136">
    <property type="entry name" value="CdhE"/>
    <property type="match status" value="1"/>
</dbReference>
<dbReference type="InterPro" id="IPR007202">
    <property type="entry name" value="4Fe-4S_dom"/>
</dbReference>
<dbReference type="InterPro" id="IPR016041">
    <property type="entry name" value="Ac-CoA_synth_d_su_TIM-brl"/>
</dbReference>
<dbReference type="InterPro" id="IPR051069">
    <property type="entry name" value="ACDS_complex_subunit"/>
</dbReference>
<dbReference type="InterPro" id="IPR016218">
    <property type="entry name" value="AcylCoA_decarb/synth_gsu"/>
</dbReference>
<dbReference type="InterPro" id="IPR023427">
    <property type="entry name" value="AcylCoA_decarb/synth_gsu_arc"/>
</dbReference>
<dbReference type="InterPro" id="IPR011005">
    <property type="entry name" value="Dihydropteroate_synth-like_sf"/>
</dbReference>
<dbReference type="NCBIfam" id="NF003195">
    <property type="entry name" value="PRK04165.1"/>
    <property type="match status" value="1"/>
</dbReference>
<dbReference type="PANTHER" id="PTHR36214">
    <property type="match status" value="1"/>
</dbReference>
<dbReference type="PANTHER" id="PTHR36214:SF3">
    <property type="entry name" value="ACETYL-COA DECARBONYLASE_SYNTHASE COMPLEX SUBUNIT GAMMA"/>
    <property type="match status" value="1"/>
</dbReference>
<dbReference type="Pfam" id="PF03599">
    <property type="entry name" value="CdhD"/>
    <property type="match status" value="1"/>
</dbReference>
<dbReference type="Pfam" id="PF04060">
    <property type="entry name" value="FeS"/>
    <property type="match status" value="1"/>
</dbReference>
<dbReference type="PIRSF" id="PIRSF000376">
    <property type="entry name" value="AcCoA_decarb_gamma"/>
    <property type="match status" value="1"/>
</dbReference>
<dbReference type="SUPFAM" id="SSF51717">
    <property type="entry name" value="Dihydropteroate synthetase-like"/>
    <property type="match status" value="1"/>
</dbReference>
<dbReference type="PROSITE" id="PS51656">
    <property type="entry name" value="4FE4S"/>
    <property type="match status" value="1"/>
</dbReference>
<evidence type="ECO:0000255" key="1">
    <source>
        <dbReference type="HAMAP-Rule" id="MF_01136"/>
    </source>
</evidence>
<evidence type="ECO:0000255" key="2">
    <source>
        <dbReference type="PROSITE-ProRule" id="PRU00989"/>
    </source>
</evidence>
<name>ACDG2_METMA</name>
<protein>
    <recommendedName>
        <fullName evidence="1">Acetyl-CoA decarbonylase/synthase complex subunit gamma 2</fullName>
        <shortName evidence="1">ACDS complex subunit gamma 2</shortName>
        <ecNumber evidence="1">2.1.1.245</ecNumber>
    </recommendedName>
    <alternativeName>
        <fullName evidence="1">5-methyltetrahydrosarcinapterin:corrinoid/iron-sulfur protein Co-methyltransferase 2</fullName>
    </alternativeName>
    <alternativeName>
        <fullName evidence="1">ACDS complex methyltransferase 2</fullName>
    </alternativeName>
    <alternativeName>
        <fullName evidence="1">Corrinoid/iron-sulfur component large subunit 2</fullName>
    </alternativeName>
</protein>
<gene>
    <name evidence="1" type="primary">cdhE2</name>
    <name type="ordered locus">MM_2084</name>
</gene>
<organism>
    <name type="scientific">Methanosarcina mazei (strain ATCC BAA-159 / DSM 3647 / Goe1 / Go1 / JCM 11833 / OCM 88)</name>
    <name type="common">Methanosarcina frisia</name>
    <dbReference type="NCBI Taxonomy" id="192952"/>
    <lineage>
        <taxon>Archaea</taxon>
        <taxon>Methanobacteriati</taxon>
        <taxon>Methanobacteriota</taxon>
        <taxon>Stenosarchaea group</taxon>
        <taxon>Methanomicrobia</taxon>
        <taxon>Methanosarcinales</taxon>
        <taxon>Methanosarcinaceae</taxon>
        <taxon>Methanosarcina</taxon>
    </lineage>
</organism>
<accession>Q8PV87</accession>
<feature type="chain" id="PRO_0000155123" description="Acetyl-CoA decarbonylase/synthase complex subunit gamma 2">
    <location>
        <begin position="1"/>
        <end position="470"/>
    </location>
</feature>
<feature type="domain" description="4Fe-4S" evidence="2">
    <location>
        <begin position="1"/>
        <end position="60"/>
    </location>
</feature>
<feature type="binding site" evidence="1">
    <location>
        <position position="18"/>
    </location>
    <ligand>
        <name>[4Fe-4S] cluster</name>
        <dbReference type="ChEBI" id="CHEBI:49883"/>
    </ligand>
</feature>
<feature type="binding site" evidence="1">
    <location>
        <position position="21"/>
    </location>
    <ligand>
        <name>[4Fe-4S] cluster</name>
        <dbReference type="ChEBI" id="CHEBI:49883"/>
    </ligand>
</feature>
<feature type="binding site" evidence="1">
    <location>
        <position position="26"/>
    </location>
    <ligand>
        <name>[4Fe-4S] cluster</name>
        <dbReference type="ChEBI" id="CHEBI:49883"/>
    </ligand>
</feature>
<feature type="binding site" evidence="1">
    <location>
        <position position="43"/>
    </location>
    <ligand>
        <name>[4Fe-4S] cluster</name>
        <dbReference type="ChEBI" id="CHEBI:49883"/>
    </ligand>
</feature>
<proteinExistence type="inferred from homology"/>
<comment type="function">
    <text evidence="1">Part of a complex that catalyzes the reversible cleavage of acetyl-CoA, allowing growth on acetate as sole source of carbon and energy.</text>
</comment>
<comment type="catalytic activity">
    <reaction evidence="1">
        <text>5,6,7,8-tetrahydrosarcinapterin + methyl-Co(III)-[corrinoid Fe-S protein] = 5-methyltetrahydrosarcinapterin + Co(I)-[corrinoid Fe-S protein] + H(+)</text>
        <dbReference type="Rhea" id="RHEA:45196"/>
        <dbReference type="Rhea" id="RHEA-COMP:11110"/>
        <dbReference type="Rhea" id="RHEA-COMP:11111"/>
        <dbReference type="ChEBI" id="CHEBI:15378"/>
        <dbReference type="ChEBI" id="CHEBI:59924"/>
        <dbReference type="ChEBI" id="CHEBI:64267"/>
        <dbReference type="ChEBI" id="CHEBI:85033"/>
        <dbReference type="ChEBI" id="CHEBI:85035"/>
        <dbReference type="EC" id="2.1.1.245"/>
    </reaction>
</comment>
<comment type="cofactor">
    <cofactor evidence="1">
        <name>corrinoid</name>
        <dbReference type="ChEBI" id="CHEBI:33913"/>
    </cofactor>
</comment>
<comment type="cofactor">
    <cofactor evidence="1">
        <name>[4Fe-4S] cluster</name>
        <dbReference type="ChEBI" id="CHEBI:49883"/>
    </cofactor>
    <text evidence="1">Binds 1 [4Fe-4S] cluster.</text>
</comment>
<comment type="pathway">
    <text evidence="1">One-carbon metabolism; methanogenesis from acetate.</text>
</comment>
<comment type="subunit">
    <text evidence="1">Heterodimer of delta and gamma chains. The ACDS complex is made up of alpha, epsilon, beta, gamma and delta chains with a probable stoichiometry of (alpha(2)epsilon(2))(4)-beta(8)-(gamma(1)delta(1))(8).</text>
</comment>
<keyword id="KW-0004">4Fe-4S</keyword>
<keyword id="KW-0170">Cobalt</keyword>
<keyword id="KW-0408">Iron</keyword>
<keyword id="KW-0411">Iron-sulfur</keyword>
<keyword id="KW-0479">Metal-binding</keyword>
<keyword id="KW-0484">Methanogenesis</keyword>
<keyword id="KW-0489">Methyltransferase</keyword>
<keyword id="KW-0808">Transferase</keyword>
<sequence>MKINSPLEAYKYLPQTNCGECGQPTCMAFASTLIDRSGKTTDCPPLIKEKKFAKKLAELDRLLAPEIRQVTIGVGERAANIGGDDVLYRHKLTFFNKTKMFFDVADNMDEAAIVERVKKISDYKKFYVGRNLLLDGVAIRAASNDPAKFATAVKKVIENTELPVILCSFNPAVLKAGLEVAKGKNPLLYAANKDNWKEVGELALEYNVPVVVSAFNDLDGLKTLAKTFAEAGIKDIVLDPGTYPTGKGLKDTFTNFLKIRRAGIMGDTEIAYPIMAMPLTAWMAGIADPVSASYWETVLSSIFTIRYGDIMLLHSMEPYATMPEVHLAETIYTDPRSPVAVDSKMYKVGNPTADSPVLFTTNFALTYYTVESDLASNGIDCWLLAVNTDGIGVEAAAAGGQLTADKVKDAFEKSGFDLKSDVTHNSVVIPGLAARLQGDIEDKLNVKVMVGPMDSGRLPGWMEKNWPPKK</sequence>
<reference key="1">
    <citation type="journal article" date="2002" name="J. Mol. Microbiol. Biotechnol.">
        <title>The genome of Methanosarcina mazei: evidence for lateral gene transfer between Bacteria and Archaea.</title>
        <authorList>
            <person name="Deppenmeier U."/>
            <person name="Johann A."/>
            <person name="Hartsch T."/>
            <person name="Merkl R."/>
            <person name="Schmitz R.A."/>
            <person name="Martinez-Arias R."/>
            <person name="Henne A."/>
            <person name="Wiezer A."/>
            <person name="Baeumer S."/>
            <person name="Jacobi C."/>
            <person name="Brueggemann H."/>
            <person name="Lienard T."/>
            <person name="Christmann A."/>
            <person name="Boemecke M."/>
            <person name="Steckel S."/>
            <person name="Bhattacharyya A."/>
            <person name="Lykidis A."/>
            <person name="Overbeek R."/>
            <person name="Klenk H.-P."/>
            <person name="Gunsalus R.P."/>
            <person name="Fritz H.-J."/>
            <person name="Gottschalk G."/>
        </authorList>
    </citation>
    <scope>NUCLEOTIDE SEQUENCE [LARGE SCALE GENOMIC DNA]</scope>
    <source>
        <strain>ATCC BAA-159 / DSM 3647 / Goe1 / Go1 / JCM 11833 / OCM 88</strain>
    </source>
</reference>